<feature type="chain" id="PRO_0000048825" description="Homeobox-leucine zipper protein ATHB-7">
    <location>
        <begin position="1"/>
        <end position="258"/>
    </location>
</feature>
<feature type="DNA-binding region" description="Homeobox" evidence="1">
    <location>
        <begin position="29"/>
        <end position="88"/>
    </location>
</feature>
<feature type="region of interest" description="Leucine-zipper">
    <location>
        <begin position="89"/>
        <end position="124"/>
    </location>
</feature>
<feature type="region of interest" description="Disordered" evidence="2">
    <location>
        <begin position="149"/>
        <end position="183"/>
    </location>
</feature>
<feature type="compositionally biased region" description="Basic and acidic residues" evidence="2">
    <location>
        <begin position="151"/>
        <end position="183"/>
    </location>
</feature>
<organism>
    <name type="scientific">Arabidopsis thaliana</name>
    <name type="common">Mouse-ear cress</name>
    <dbReference type="NCBI Taxonomy" id="3702"/>
    <lineage>
        <taxon>Eukaryota</taxon>
        <taxon>Viridiplantae</taxon>
        <taxon>Streptophyta</taxon>
        <taxon>Embryophyta</taxon>
        <taxon>Tracheophyta</taxon>
        <taxon>Spermatophyta</taxon>
        <taxon>Magnoliopsida</taxon>
        <taxon>eudicotyledons</taxon>
        <taxon>Gunneridae</taxon>
        <taxon>Pentapetalae</taxon>
        <taxon>rosids</taxon>
        <taxon>malvids</taxon>
        <taxon>Brassicales</taxon>
        <taxon>Brassicaceae</taxon>
        <taxon>Camelineae</taxon>
        <taxon>Arabidopsis</taxon>
    </lineage>
</organism>
<comment type="function">
    <text evidence="3 6">Probable transcription activator that may act as growth regulators in response to water deficit.</text>
</comment>
<comment type="subunit">
    <text evidence="5">Interacts with TBP2 and TFIIB1.</text>
</comment>
<comment type="interaction">
    <interactant intactId="EBI-15193277">
        <id>P46897</id>
    </interactant>
    <interactant intactId="EBI-15192535">
        <id>F4JI72</id>
        <label>At4g03250</label>
    </interactant>
    <organismsDiffer>false</organismsDiffer>
    <experiments>3</experiments>
</comment>
<comment type="interaction">
    <interactant intactId="EBI-15193277">
        <id>P46897</id>
    </interactant>
    <interactant intactId="EBI-4425826">
        <id>Q8LA53</id>
        <label>MBD2</label>
    </interactant>
    <organismsDiffer>false</organismsDiffer>
    <experiments>3</experiments>
</comment>
<comment type="subcellular location">
    <subcellularLocation>
        <location>Nucleus</location>
    </subcellularLocation>
</comment>
<comment type="alternative products">
    <event type="alternative splicing"/>
    <isoform>
        <id>P46897-1</id>
        <name>1</name>
        <sequence type="displayed"/>
    </isoform>
    <text>A number of isoforms are produced. According to EST sequences.</text>
</comment>
<comment type="tissue specificity">
    <text evidence="4 6">Widely expressed.</text>
</comment>
<comment type="induction">
    <text evidence="4 6">By water deficit, by abscisic acid (ABA) and by salt stress.</text>
</comment>
<comment type="similarity">
    <text evidence="7">Belongs to the HD-ZIP homeobox family. Class I subfamily.</text>
</comment>
<comment type="sequence caution" evidence="7">
    <conflict type="erroneous initiation">
        <sequence resource="EMBL-CDS" id="CAA47425"/>
    </conflict>
    <text>Extended N-terminus.</text>
</comment>
<evidence type="ECO:0000255" key="1">
    <source>
        <dbReference type="PROSITE-ProRule" id="PRU00108"/>
    </source>
</evidence>
<evidence type="ECO:0000256" key="2">
    <source>
        <dbReference type="SAM" id="MobiDB-lite"/>
    </source>
</evidence>
<evidence type="ECO:0000269" key="3">
    <source>
    </source>
</evidence>
<evidence type="ECO:0000269" key="4">
    <source>
    </source>
</evidence>
<evidence type="ECO:0000269" key="5">
    <source>
    </source>
</evidence>
<evidence type="ECO:0000269" key="6">
    <source>
    </source>
</evidence>
<evidence type="ECO:0000305" key="7"/>
<accession>P46897</accession>
<accession>Q9SLF9</accession>
<keyword id="KW-0025">Alternative splicing</keyword>
<keyword id="KW-0238">DNA-binding</keyword>
<keyword id="KW-0371">Homeobox</keyword>
<keyword id="KW-0539">Nucleus</keyword>
<keyword id="KW-1185">Reference proteome</keyword>
<keyword id="KW-0346">Stress response</keyword>
<keyword id="KW-0804">Transcription</keyword>
<keyword id="KW-0805">Transcription regulation</keyword>
<dbReference type="EMBL" id="X67032">
    <property type="protein sequence ID" value="CAA47425.1"/>
    <property type="status" value="ALT_INIT"/>
    <property type="molecule type" value="mRNA"/>
</dbReference>
<dbReference type="EMBL" id="AC005819">
    <property type="protein sequence ID" value="AAC69925.1"/>
    <property type="molecule type" value="Genomic_DNA"/>
</dbReference>
<dbReference type="EMBL" id="CP002685">
    <property type="protein sequence ID" value="AEC10739.1"/>
    <property type="molecule type" value="Genomic_DNA"/>
</dbReference>
<dbReference type="EMBL" id="AY045826">
    <property type="protein sequence ID" value="AAK76500.1"/>
    <property type="molecule type" value="mRNA"/>
</dbReference>
<dbReference type="EMBL" id="AY091364">
    <property type="protein sequence ID" value="AAM14303.1"/>
    <property type="molecule type" value="mRNA"/>
</dbReference>
<dbReference type="PIR" id="H84905">
    <property type="entry name" value="H84905"/>
</dbReference>
<dbReference type="PIR" id="S47137">
    <property type="entry name" value="S47137"/>
</dbReference>
<dbReference type="RefSeq" id="NP_182191.1">
    <molecule id="P46897-1"/>
    <property type="nucleotide sequence ID" value="NM_130233.5"/>
</dbReference>
<dbReference type="SMR" id="P46897"/>
<dbReference type="BioGRID" id="4615">
    <property type="interactions" value="15"/>
</dbReference>
<dbReference type="FunCoup" id="P46897">
    <property type="interactions" value="353"/>
</dbReference>
<dbReference type="IntAct" id="P46897">
    <property type="interactions" value="12"/>
</dbReference>
<dbReference type="STRING" id="3702.P46897"/>
<dbReference type="PaxDb" id="3702-AT2G46680.1"/>
<dbReference type="ProteomicsDB" id="246628">
    <molecule id="P46897-1"/>
</dbReference>
<dbReference type="EnsemblPlants" id="AT2G46680.1">
    <molecule id="P46897-1"/>
    <property type="protein sequence ID" value="AT2G46680.1"/>
    <property type="gene ID" value="AT2G46680"/>
</dbReference>
<dbReference type="GeneID" id="819280"/>
<dbReference type="Gramene" id="AT2G46680.1">
    <molecule id="P46897-1"/>
    <property type="protein sequence ID" value="AT2G46680.1"/>
    <property type="gene ID" value="AT2G46680"/>
</dbReference>
<dbReference type="KEGG" id="ath:AT2G46680"/>
<dbReference type="Araport" id="AT2G46680"/>
<dbReference type="TAIR" id="AT2G46680">
    <property type="gene designation" value="HB-7"/>
</dbReference>
<dbReference type="eggNOG" id="KOG0483">
    <property type="taxonomic scope" value="Eukaryota"/>
</dbReference>
<dbReference type="HOGENOM" id="CLU_060842_3_0_1"/>
<dbReference type="InParanoid" id="P46897"/>
<dbReference type="OMA" id="NSHIKRE"/>
<dbReference type="OrthoDB" id="6159439at2759"/>
<dbReference type="PhylomeDB" id="P46897"/>
<dbReference type="PRO" id="PR:P46897"/>
<dbReference type="Proteomes" id="UP000006548">
    <property type="component" value="Chromosome 2"/>
</dbReference>
<dbReference type="ExpressionAtlas" id="P46897">
    <property type="expression patterns" value="baseline and differential"/>
</dbReference>
<dbReference type="GO" id="GO:0005634">
    <property type="term" value="C:nucleus"/>
    <property type="evidence" value="ECO:0007669"/>
    <property type="project" value="UniProtKB-SubCell"/>
</dbReference>
<dbReference type="GO" id="GO:0003700">
    <property type="term" value="F:DNA-binding transcription factor activity"/>
    <property type="evidence" value="ECO:0000250"/>
    <property type="project" value="TAIR"/>
</dbReference>
<dbReference type="GO" id="GO:0000981">
    <property type="term" value="F:DNA-binding transcription factor activity, RNA polymerase II-specific"/>
    <property type="evidence" value="ECO:0007669"/>
    <property type="project" value="InterPro"/>
</dbReference>
<dbReference type="GO" id="GO:0000976">
    <property type="term" value="F:transcription cis-regulatory region binding"/>
    <property type="evidence" value="ECO:0000353"/>
    <property type="project" value="TAIR"/>
</dbReference>
<dbReference type="GO" id="GO:0045893">
    <property type="term" value="P:positive regulation of DNA-templated transcription"/>
    <property type="evidence" value="ECO:0000314"/>
    <property type="project" value="TAIR"/>
</dbReference>
<dbReference type="GO" id="GO:0009737">
    <property type="term" value="P:response to abscisic acid"/>
    <property type="evidence" value="ECO:0000270"/>
    <property type="project" value="TAIR"/>
</dbReference>
<dbReference type="GO" id="GO:0009414">
    <property type="term" value="P:response to water deprivation"/>
    <property type="evidence" value="ECO:0000270"/>
    <property type="project" value="TAIR"/>
</dbReference>
<dbReference type="CDD" id="cd00086">
    <property type="entry name" value="homeodomain"/>
    <property type="match status" value="1"/>
</dbReference>
<dbReference type="FunFam" id="1.10.10.60:FF:000293">
    <property type="entry name" value="Homeobox-leucine zipper protein ATHB-7"/>
    <property type="match status" value="1"/>
</dbReference>
<dbReference type="Gene3D" id="1.10.10.60">
    <property type="entry name" value="Homeodomain-like"/>
    <property type="match status" value="1"/>
</dbReference>
<dbReference type="InterPro" id="IPR001356">
    <property type="entry name" value="HD"/>
</dbReference>
<dbReference type="InterPro" id="IPR045224">
    <property type="entry name" value="HDZip_class_I_plant"/>
</dbReference>
<dbReference type="InterPro" id="IPR017970">
    <property type="entry name" value="Homeobox_CS"/>
</dbReference>
<dbReference type="InterPro" id="IPR009057">
    <property type="entry name" value="Homeodomain-like_sf"/>
</dbReference>
<dbReference type="InterPro" id="IPR000047">
    <property type="entry name" value="HTH_motif"/>
</dbReference>
<dbReference type="InterPro" id="IPR003106">
    <property type="entry name" value="Leu_zip_homeo"/>
</dbReference>
<dbReference type="PANTHER" id="PTHR24326">
    <property type="entry name" value="HOMEOBOX-LEUCINE ZIPPER PROTEIN"/>
    <property type="match status" value="1"/>
</dbReference>
<dbReference type="PANTHER" id="PTHR24326:SF604">
    <property type="entry name" value="HOMEOBOX-LEUCINE ZIPPER PROTEIN ATHB-7"/>
    <property type="match status" value="1"/>
</dbReference>
<dbReference type="Pfam" id="PF02183">
    <property type="entry name" value="HALZ"/>
    <property type="match status" value="1"/>
</dbReference>
<dbReference type="Pfam" id="PF00046">
    <property type="entry name" value="Homeodomain"/>
    <property type="match status" value="1"/>
</dbReference>
<dbReference type="PRINTS" id="PR00031">
    <property type="entry name" value="HTHREPRESSR"/>
</dbReference>
<dbReference type="SMART" id="SM00389">
    <property type="entry name" value="HOX"/>
    <property type="match status" value="1"/>
</dbReference>
<dbReference type="SUPFAM" id="SSF46689">
    <property type="entry name" value="Homeodomain-like"/>
    <property type="match status" value="1"/>
</dbReference>
<dbReference type="PROSITE" id="PS00027">
    <property type="entry name" value="HOMEOBOX_1"/>
    <property type="match status" value="1"/>
</dbReference>
<dbReference type="PROSITE" id="PS50071">
    <property type="entry name" value="HOMEOBOX_2"/>
    <property type="match status" value="1"/>
</dbReference>
<protein>
    <recommendedName>
        <fullName>Homeobox-leucine zipper protein ATHB-7</fullName>
    </recommendedName>
    <alternativeName>
        <fullName>HD-ZIP protein ATHB-7</fullName>
    </alternativeName>
    <alternativeName>
        <fullName>Homeodomain transcription factor ATHB-7</fullName>
    </alternativeName>
</protein>
<sequence length="258" mass="30511">MTEGGEYSPAMMSAEPFLTMKKMKKSNHNKNNQRRFSDEQIKSLEMMFESETRLEPRKKVQLARELGLQPRQVAIWFQNKRARWKSKQLETEYNILRQNYDNLASQFESLKKEKQALVSELQRLKEATQKKTQEEERQCSGDQAVVALSSTHHESENEENRRRKPEEVRPEMEMKDDKGHHGVMCDHHDYEDDDNGYSNNIKREYFGGFEEEPDHLMNIVEPADSCLTSSDDWRGFKSDTTTLLDQSSNNYPWRDFWS</sequence>
<name>ATHB7_ARATH</name>
<gene>
    <name type="primary">ATHB-7</name>
    <name type="ordered locus">At2g46680</name>
    <name type="ORF">T3A4.6</name>
</gene>
<reference key="1">
    <citation type="journal article" date="1994" name="Plant Mol. Biol.">
        <title>Expression patterns of novel genes encoding homeodomain leucine-zipper proteins in Arabidopsis thaliana.</title>
        <authorList>
            <person name="Soederman E."/>
            <person name="Mattsson J."/>
            <person name="Svenson M."/>
            <person name="Borkird C."/>
            <person name="Engstroem P."/>
        </authorList>
    </citation>
    <scope>NUCLEOTIDE SEQUENCE [MRNA]</scope>
    <source>
        <strain>cv. Columbia</strain>
    </source>
</reference>
<reference key="2">
    <citation type="journal article" date="1999" name="Nature">
        <title>Sequence and analysis of chromosome 2 of the plant Arabidopsis thaliana.</title>
        <authorList>
            <person name="Lin X."/>
            <person name="Kaul S."/>
            <person name="Rounsley S.D."/>
            <person name="Shea T.P."/>
            <person name="Benito M.-I."/>
            <person name="Town C.D."/>
            <person name="Fujii C.Y."/>
            <person name="Mason T.M."/>
            <person name="Bowman C.L."/>
            <person name="Barnstead M.E."/>
            <person name="Feldblyum T.V."/>
            <person name="Buell C.R."/>
            <person name="Ketchum K.A."/>
            <person name="Lee J.J."/>
            <person name="Ronning C.M."/>
            <person name="Koo H.L."/>
            <person name="Moffat K.S."/>
            <person name="Cronin L.A."/>
            <person name="Shen M."/>
            <person name="Pai G."/>
            <person name="Van Aken S."/>
            <person name="Umayam L."/>
            <person name="Tallon L.J."/>
            <person name="Gill J.E."/>
            <person name="Adams M.D."/>
            <person name="Carrera A.J."/>
            <person name="Creasy T.H."/>
            <person name="Goodman H.M."/>
            <person name="Somerville C.R."/>
            <person name="Copenhaver G.P."/>
            <person name="Preuss D."/>
            <person name="Nierman W.C."/>
            <person name="White O."/>
            <person name="Eisen J.A."/>
            <person name="Salzberg S.L."/>
            <person name="Fraser C.M."/>
            <person name="Venter J.C."/>
        </authorList>
    </citation>
    <scope>NUCLEOTIDE SEQUENCE [LARGE SCALE GENOMIC DNA]</scope>
    <source>
        <strain>cv. Columbia</strain>
    </source>
</reference>
<reference key="3">
    <citation type="journal article" date="2017" name="Plant J.">
        <title>Araport11: a complete reannotation of the Arabidopsis thaliana reference genome.</title>
        <authorList>
            <person name="Cheng C.Y."/>
            <person name="Krishnakumar V."/>
            <person name="Chan A.P."/>
            <person name="Thibaud-Nissen F."/>
            <person name="Schobel S."/>
            <person name="Town C.D."/>
        </authorList>
    </citation>
    <scope>GENOME REANNOTATION</scope>
    <source>
        <strain>cv. Columbia</strain>
    </source>
</reference>
<reference key="4">
    <citation type="journal article" date="2003" name="Science">
        <title>Empirical analysis of transcriptional activity in the Arabidopsis genome.</title>
        <authorList>
            <person name="Yamada K."/>
            <person name="Lim J."/>
            <person name="Dale J.M."/>
            <person name="Chen H."/>
            <person name="Shinn P."/>
            <person name="Palm C.J."/>
            <person name="Southwick A.M."/>
            <person name="Wu H.C."/>
            <person name="Kim C.J."/>
            <person name="Nguyen M."/>
            <person name="Pham P.K."/>
            <person name="Cheuk R.F."/>
            <person name="Karlin-Newmann G."/>
            <person name="Liu S.X."/>
            <person name="Lam B."/>
            <person name="Sakano H."/>
            <person name="Wu T."/>
            <person name="Yu G."/>
            <person name="Miranda M."/>
            <person name="Quach H.L."/>
            <person name="Tripp M."/>
            <person name="Chang C.H."/>
            <person name="Lee J.M."/>
            <person name="Toriumi M.J."/>
            <person name="Chan M.M."/>
            <person name="Tang C.C."/>
            <person name="Onodera C.S."/>
            <person name="Deng J.M."/>
            <person name="Akiyama K."/>
            <person name="Ansari Y."/>
            <person name="Arakawa T."/>
            <person name="Banh J."/>
            <person name="Banno F."/>
            <person name="Bowser L."/>
            <person name="Brooks S.Y."/>
            <person name="Carninci P."/>
            <person name="Chao Q."/>
            <person name="Choy N."/>
            <person name="Enju A."/>
            <person name="Goldsmith A.D."/>
            <person name="Gurjal M."/>
            <person name="Hansen N.F."/>
            <person name="Hayashizaki Y."/>
            <person name="Johnson-Hopson C."/>
            <person name="Hsuan V.W."/>
            <person name="Iida K."/>
            <person name="Karnes M."/>
            <person name="Khan S."/>
            <person name="Koesema E."/>
            <person name="Ishida J."/>
            <person name="Jiang P.X."/>
            <person name="Jones T."/>
            <person name="Kawai J."/>
            <person name="Kamiya A."/>
            <person name="Meyers C."/>
            <person name="Nakajima M."/>
            <person name="Narusaka M."/>
            <person name="Seki M."/>
            <person name="Sakurai T."/>
            <person name="Satou M."/>
            <person name="Tamse R."/>
            <person name="Vaysberg M."/>
            <person name="Wallender E.K."/>
            <person name="Wong C."/>
            <person name="Yamamura Y."/>
            <person name="Yuan S."/>
            <person name="Shinozaki K."/>
            <person name="Davis R.W."/>
            <person name="Theologis A."/>
            <person name="Ecker J.R."/>
        </authorList>
    </citation>
    <scope>NUCLEOTIDE SEQUENCE [LARGE SCALE MRNA]</scope>
    <source>
        <strain>cv. Columbia</strain>
    </source>
</reference>
<reference key="5">
    <citation type="journal article" date="1996" name="Plant J.">
        <title>The Arabidopsis homeobox gene ATHB-7 is induced by water deficit and by abscisic acid.</title>
        <authorList>
            <person name="Soederman E."/>
            <person name="Mattsson J."/>
            <person name="Engstroem P."/>
        </authorList>
    </citation>
    <scope>TISSUE SPECIFICITY</scope>
    <scope>INDUCTION</scope>
    <scope>FUNCTION</scope>
</reference>
<reference key="6">
    <citation type="journal article" date="2004" name="Plant Mol. Biol.">
        <title>The homeobox genes ATHB12 and ATHB7 encode potential regulators of growth in response to water deficit in Arabidopsis.</title>
        <authorList>
            <person name="Olsson A.S.B."/>
            <person name="Engstroem P."/>
            <person name="Seoderman E."/>
        </authorList>
    </citation>
    <scope>FUNCTION</scope>
</reference>
<reference key="7">
    <citation type="journal article" date="2005" name="Plant Physiol.">
        <title>Homeodomain leucine zipper class I genes in Arabidopsis. Expression patterns and phylogenetic relationships.</title>
        <authorList>
            <person name="Henriksson E."/>
            <person name="Olsson A.S.B."/>
            <person name="Johannesson H."/>
            <person name="Johansson H."/>
            <person name="Hanson J."/>
            <person name="Engstroem P."/>
            <person name="Soederman E."/>
        </authorList>
    </citation>
    <scope>GENE FAMILY</scope>
    <scope>TISSUE SPECIFICITY</scope>
    <scope>INDUCTION</scope>
</reference>
<reference key="8">
    <citation type="journal article" date="2014" name="Plant Cell Rep.">
        <title>Plant homeodomain-leucine zipper I transcription factors exhibit different functional AHA motifs that selectively interact with TBP or/and TFIIB.</title>
        <authorList>
            <person name="Capella M."/>
            <person name="Re D.A."/>
            <person name="Arce A.L."/>
            <person name="Chan R.L."/>
        </authorList>
    </citation>
    <scope>INTERACTION WITH TBP2 AND TFIIB1</scope>
</reference>
<proteinExistence type="evidence at protein level"/>